<accession>Q7NAT4</accession>
<evidence type="ECO:0000250" key="1"/>
<evidence type="ECO:0000255" key="2"/>
<evidence type="ECO:0000256" key="3">
    <source>
        <dbReference type="SAM" id="MobiDB-lite"/>
    </source>
</evidence>
<proteinExistence type="inferred from homology"/>
<gene>
    <name type="primary">hlp1</name>
    <name type="synonym">hmw3</name>
    <name type="ordered locus">MYCGA5510</name>
    <name type="ORF">MGA_0306</name>
</gene>
<name>HMW1_MYCGA</name>
<reference key="1">
    <citation type="journal article" date="2003" name="Microbiology">
        <title>The complete genome sequence of the avian pathogen Mycoplasma gallisepticum strain R(low).</title>
        <authorList>
            <person name="Papazisi L."/>
            <person name="Gorton T.S."/>
            <person name="Kutish G."/>
            <person name="Markham P.F."/>
            <person name="Browning G.F."/>
            <person name="Nguyen D.K."/>
            <person name="Swartzell S."/>
            <person name="Madan A."/>
            <person name="Mahairas G."/>
            <person name="Geary S.J."/>
        </authorList>
    </citation>
    <scope>NUCLEOTIDE SEQUENCE [LARGE SCALE GENOMIC DNA]</scope>
    <source>
        <strain>R(low / passage 15 / clone 2)</strain>
    </source>
</reference>
<dbReference type="EMBL" id="AE015450">
    <property type="protein sequence ID" value="AAP56901.2"/>
    <property type="molecule type" value="Genomic_DNA"/>
</dbReference>
<dbReference type="RefSeq" id="WP_011113808.1">
    <property type="nucleotide sequence ID" value="NC_004829.2"/>
</dbReference>
<dbReference type="SMR" id="Q7NAT4"/>
<dbReference type="KEGG" id="mga:MGA_0306"/>
<dbReference type="PATRIC" id="fig|233150.7.peg.623"/>
<dbReference type="HOGENOM" id="CLU_235452_0_0_14"/>
<dbReference type="OrthoDB" id="401460at2"/>
<dbReference type="Proteomes" id="UP000001418">
    <property type="component" value="Chromosome"/>
</dbReference>
<dbReference type="GO" id="GO:0033111">
    <property type="term" value="C:attachment organelle membrane"/>
    <property type="evidence" value="ECO:0007669"/>
    <property type="project" value="UniProtKB-SubCell"/>
</dbReference>
<dbReference type="GO" id="GO:0042995">
    <property type="term" value="C:cell projection"/>
    <property type="evidence" value="ECO:0007669"/>
    <property type="project" value="UniProtKB-KW"/>
</dbReference>
<dbReference type="GO" id="GO:0005886">
    <property type="term" value="C:plasma membrane"/>
    <property type="evidence" value="ECO:0007669"/>
    <property type="project" value="UniProtKB-KW"/>
</dbReference>
<dbReference type="GO" id="GO:0020035">
    <property type="term" value="P:adhesion of symbiont to microvasculature"/>
    <property type="evidence" value="ECO:0007669"/>
    <property type="project" value="UniProtKB-KW"/>
</dbReference>
<dbReference type="Gene3D" id="3.30.70.3600">
    <property type="match status" value="7"/>
</dbReference>
<dbReference type="InterPro" id="IPR021199">
    <property type="entry name" value="Cytadherence_HMW-1_N"/>
</dbReference>
<dbReference type="InterPro" id="IPR022466">
    <property type="entry name" value="EAGR_box"/>
</dbReference>
<dbReference type="InterPro" id="IPR038145">
    <property type="entry name" value="EAGR_sf"/>
</dbReference>
<dbReference type="NCBIfam" id="TIGR03834">
    <property type="entry name" value="EAGR_box"/>
    <property type="match status" value="7"/>
</dbReference>
<dbReference type="NCBIfam" id="TIGR03836">
    <property type="entry name" value="termin_org_HMW1"/>
    <property type="match status" value="1"/>
</dbReference>
<dbReference type="Pfam" id="PF16713">
    <property type="entry name" value="EAGR_box"/>
    <property type="match status" value="7"/>
</dbReference>
<sequence length="1969" mass="227910">MPKMIKGTEFIVAKKTKNKKKNHFEDIQTTNDINEEESEAIFGNLYDGADEVLPASLAYENGQLPEDGSIQVAFDADDNAYYISYDPENEIFIEPYEKYELDVSALYDAEGNPFDFFANYHVEGAETSQEEESGEYWEQFVGVEGYGYYDENEEWVWTGYFDEDNKFIPNEEEKPAEVEALEEESEATEEVVEQEPQEEVQAEEVVEEPVSQEQPEEEVAAEEYAEAAQEEYEEQPESEQEGSGEYWEQFVGVEGYGYYDENNDWVWTGYFDENNNFVPDQYYDEDAAVAGDEQVEEYSAQQEQVQEEYEQQPEQEGSGEYWEQFVGVEGYGYYDENNDWVWTGYFDENNNFVPDQYYDEYAQPVSEEQYSESVSEEQEPASEEQVAEEPAQVEEVAVEQVPEETQPEQVQEKVQAYEHVEEQQPEEVFADAIDEHYDEITHVEDKAVEEEQIQTDNVVSSDEINWSNYVGNEDYGYYDENNEWVWKGYFNEYGMFIPQEEDYTDSIPVDEQPVEQTADLAEQNEEEVIEETTASDEIVQVEEEVESEPVVPTVSDDLVALEQPFEFDTQQFVGNIDFGYYDESSEWIWTGHFDKDGKFFDFDGNLVYSPQEGVKPVEVPKPTDLTNQIPQNALVVAEPDVFSEDTIQQVDESQFDVGEELVVRGLLNPASTPVQPQELNIKPVFEEEKLNLPVLANEVSLQPQVDYSKRSDFDQLVTQTPVVLEDVVADDLISVDTKGFVPELSQPTFAPKAVSQDQFKLVQPVVSQPKFDQITHLTDEIKMDVNVTSSDVDVQPIQINPSLEVASEPSKLDIFVKKPAVELKKIEFIEPVSEKIDLQIFEQQEIVTKPVSTIQKPTYTDETVSVSVNAIDETTSETDTIVQVTPTTSEASDFDINKILNTKPVETITVELPKDEPKLVTGVHVSLVDVEAKPVEEIVKFDSPKPSVSEVVVEKEDKLTLVEEEPFFNKFIGNEQYGYYNNKNVWIWTGYFDDQNNFVSDKDSKTQKVDQLIEEFNKQEAIKKTEEVEAKKASEPFYNKYIGNKQFGYYNDKNVWIWNGYFDENDQFVPDQSWTKRSEKLIEDELQKQRIHELELELAQAQQAILESTKLKDQEVAKIKEEVLKVQQEAIKAKEVATLRNFVPKGSPLLNPAKEVENSMIVYQEDKLEVNDLRNELSKLKTQREEFDNFSKIRDLDVINLYNASTSHRGMDYVFSGFEKKEEQFVKKPLHFLEEVKADPVQVAKEETISNLDQLLKQDPHLLLAKKTDKSVSPQASLTVLADQKEVELTQQAVRKQAEAIEAERVDVIKPLEQVQLNQSRSLLDDLTPKFEVKPSLIKDDVIQPKYNDDLEPIEQLQFKQERSLLDDYMPKFDDQGLFSKVEFKLPTVNKEYRPKVEPIDVIKPLEPVRINKERSLLDDYLPPKLNAQPTFEKTELDLGLEKPLANGELYEELKAEFSTTITPADSKDMIDQLLEETNDLITSSTQTRSTKIHSFSKSPLKTEPEPILDTKFDDKFIELDENQGFDQLIVESDDELLTDVVQEQVSVNQIAVTNEEYKKDMAELKQFLEKRSEELFKQYFSKFEELTKLQMESFNQIKNELRSEMNEIRDEVRSNKLALTSEITEEIYPSAPKVSRKQRGVHGFSEPTSEFDFDNSLSLVNENNYDLYELLDRIINYEDVPLTSSNLFKAEEYQAKVKQSVYNIKLILKNSEAEATKNYNYILSTLKNEITLLQKDLPIISSQLNKLQHDLRAKQLNRGDYKFVQEQIQELRAEHANKTRAISFYNKKVSDLKSIYAQQIRKIKSDYKKISDLANKRKVSSDYIDQALQSFETARVSQPNIKRNYEQLYRNQLQQNVNANYGNFRRYDPLIENHGYEYFSNHQPREFFSELESIDNDIFSSNDLIYSNRNTYLDENFRINDYELTSNFNDIDAIYGMDKLRLPPFEPSNLVNDMEFNSSFDIDFDTDF</sequence>
<organism>
    <name type="scientific">Mycoplasmoides gallisepticum (strain R(low / passage 15 / clone 2))</name>
    <name type="common">Mycoplasma gallisepticum</name>
    <dbReference type="NCBI Taxonomy" id="710127"/>
    <lineage>
        <taxon>Bacteria</taxon>
        <taxon>Bacillati</taxon>
        <taxon>Mycoplasmatota</taxon>
        <taxon>Mycoplasmoidales</taxon>
        <taxon>Mycoplasmoidaceae</taxon>
        <taxon>Mycoplasmoides</taxon>
    </lineage>
</organism>
<protein>
    <recommendedName>
        <fullName>Cytadherence high molecular weight protein 1</fullName>
    </recommendedName>
    <alternativeName>
        <fullName>Cytadherence accessory protein 1</fullName>
    </alternativeName>
</protein>
<feature type="chain" id="PRO_0000380119" description="Cytadherence high molecular weight protein 1">
    <location>
        <begin position="1"/>
        <end position="1969"/>
    </location>
</feature>
<feature type="repeat" description="HAT 1">
    <location>
        <begin position="148"/>
        <end position="166"/>
    </location>
</feature>
<feature type="repeat" description="HAT 2">
    <location>
        <begin position="258"/>
        <end position="278"/>
    </location>
</feature>
<feature type="repeat" description="HAT 3">
    <location>
        <begin position="300"/>
        <end position="331"/>
    </location>
</feature>
<feature type="repeat" description="HAT 4">
    <location>
        <begin position="333"/>
        <end position="353"/>
    </location>
</feature>
<feature type="repeat" description="HAT 5">
    <location>
        <begin position="477"/>
        <end position="497"/>
    </location>
</feature>
<feature type="repeat" description="HAT 6">
    <location>
        <begin position="959"/>
        <end position="997"/>
    </location>
</feature>
<feature type="repeat" description="HAT 7">
    <location>
        <begin position="1029"/>
        <end position="1067"/>
    </location>
</feature>
<feature type="region of interest" description="Disordered" evidence="3">
    <location>
        <begin position="174"/>
        <end position="244"/>
    </location>
</feature>
<feature type="region of interest" description="Disordered" evidence="3">
    <location>
        <begin position="294"/>
        <end position="319"/>
    </location>
</feature>
<feature type="region of interest" description="Disordered" evidence="3">
    <location>
        <begin position="365"/>
        <end position="393"/>
    </location>
</feature>
<feature type="coiled-coil region" evidence="2">
    <location>
        <begin position="1000"/>
        <end position="1027"/>
    </location>
</feature>
<feature type="coiled-coil region" evidence="2">
    <location>
        <begin position="1082"/>
        <end position="1190"/>
    </location>
</feature>
<feature type="coiled-coil region" evidence="2">
    <location>
        <begin position="1547"/>
        <end position="1621"/>
    </location>
</feature>
<feature type="coiled-coil region" evidence="2">
    <location>
        <begin position="1758"/>
        <end position="1790"/>
    </location>
</feature>
<feature type="compositionally biased region" description="Acidic residues" evidence="3">
    <location>
        <begin position="179"/>
        <end position="207"/>
    </location>
</feature>
<feature type="compositionally biased region" description="Acidic residues" evidence="3">
    <location>
        <begin position="214"/>
        <end position="242"/>
    </location>
</feature>
<feature type="compositionally biased region" description="Acidic residues" evidence="3">
    <location>
        <begin position="374"/>
        <end position="387"/>
    </location>
</feature>
<comment type="function">
    <text evidence="1">Component of the cytoskeleton-like structure which stabilizes the shape of the wall-less Mycoplasma. This cytoskeleton-like network of accessory proteins containing HMW proteins 1 to 5 allows the proper anchoring of cytadhesin proteins in the mycoplasmal membrane at the attachment organelle (By similarity).</text>
</comment>
<comment type="subcellular location">
    <subcellularLocation>
        <location evidence="1">Cell projection</location>
        <location evidence="1">Attachment organelle membrane</location>
    </subcellularLocation>
    <text evidence="1">Localizes specifically to the attachment membrane.</text>
</comment>
<keyword id="KW-1003">Cell membrane</keyword>
<keyword id="KW-0966">Cell projection</keyword>
<keyword id="KW-0175">Coiled coil</keyword>
<keyword id="KW-0200">Cytadherence</keyword>
<keyword id="KW-0472">Membrane</keyword>
<keyword id="KW-1185">Reference proteome</keyword>
<keyword id="KW-0677">Repeat</keyword>
<keyword id="KW-0843">Virulence</keyword>